<gene>
    <name type="primary">GLDN</name>
    <name type="synonym">COLM</name>
    <name type="ORF">UNQ9339/PRO34011</name>
</gene>
<dbReference type="EMBL" id="AK172756">
    <property type="protein sequence ID" value="BAD18742.1"/>
    <property type="molecule type" value="mRNA"/>
</dbReference>
<dbReference type="EMBL" id="BX538105">
    <property type="protein sequence ID" value="CAD98018.1"/>
    <property type="molecule type" value="mRNA"/>
</dbReference>
<dbReference type="EMBL" id="AY358144">
    <property type="protein sequence ID" value="AAQ88511.1"/>
    <property type="molecule type" value="mRNA"/>
</dbReference>
<dbReference type="EMBL" id="BK001262">
    <property type="protein sequence ID" value="DAA01143.1"/>
    <property type="molecule type" value="mRNA"/>
</dbReference>
<dbReference type="CCDS" id="CCDS10140.2">
    <molecule id="Q6ZMI3-1"/>
</dbReference>
<dbReference type="CCDS" id="CCDS81882.1">
    <molecule id="Q6ZMI3-2"/>
</dbReference>
<dbReference type="RefSeq" id="NP_001317226.1">
    <molecule id="Q6ZMI3-2"/>
    <property type="nucleotide sequence ID" value="NM_001330297.2"/>
</dbReference>
<dbReference type="RefSeq" id="NP_861454.2">
    <molecule id="Q6ZMI3-1"/>
    <property type="nucleotide sequence ID" value="NM_181789.4"/>
</dbReference>
<dbReference type="RefSeq" id="XP_016877611.1">
    <molecule id="Q6ZMI3-2"/>
    <property type="nucleotide sequence ID" value="XM_017022122.3"/>
</dbReference>
<dbReference type="RefSeq" id="XP_016877613.1">
    <molecule id="Q6ZMI3-2"/>
    <property type="nucleotide sequence ID" value="XM_017022124.3"/>
</dbReference>
<dbReference type="RefSeq" id="XP_047288387.1">
    <molecule id="Q6ZMI3-2"/>
    <property type="nucleotide sequence ID" value="XM_047432431.1"/>
</dbReference>
<dbReference type="RefSeq" id="XP_054233785.1">
    <molecule id="Q6ZMI3-2"/>
    <property type="nucleotide sequence ID" value="XM_054377810.1"/>
</dbReference>
<dbReference type="RefSeq" id="XP_054233786.1">
    <molecule id="Q6ZMI3-2"/>
    <property type="nucleotide sequence ID" value="XM_054377811.1"/>
</dbReference>
<dbReference type="PDB" id="5YBY">
    <property type="method" value="X-ray"/>
    <property type="resolution" value="1.43 A"/>
    <property type="chains" value="A=301-551"/>
</dbReference>
<dbReference type="PDBsum" id="5YBY"/>
<dbReference type="SMR" id="Q6ZMI3"/>
<dbReference type="FunCoup" id="Q6ZMI3">
    <property type="interactions" value="100"/>
</dbReference>
<dbReference type="IntAct" id="Q6ZMI3">
    <property type="interactions" value="1"/>
</dbReference>
<dbReference type="STRING" id="9606.ENSP00000335196"/>
<dbReference type="GlyConnect" id="1939">
    <property type="glycosylation" value="5 N-Linked glycans (2 sites)"/>
</dbReference>
<dbReference type="GlyCosmos" id="Q6ZMI3">
    <property type="glycosylation" value="5 sites, 5 glycans"/>
</dbReference>
<dbReference type="GlyGen" id="Q6ZMI3">
    <property type="glycosylation" value="5 sites, 5 N-linked glycans (2 sites)"/>
</dbReference>
<dbReference type="iPTMnet" id="Q6ZMI3"/>
<dbReference type="MetOSite" id="Q6ZMI3"/>
<dbReference type="PhosphoSitePlus" id="Q6ZMI3"/>
<dbReference type="BioMuta" id="GLDN"/>
<dbReference type="DMDM" id="74749534"/>
<dbReference type="MassIVE" id="Q6ZMI3"/>
<dbReference type="PaxDb" id="9606-ENSP00000335196"/>
<dbReference type="PeptideAtlas" id="Q6ZMI3"/>
<dbReference type="ProteomicsDB" id="67876">
    <molecule id="Q6ZMI3-1"/>
</dbReference>
<dbReference type="ProteomicsDB" id="67877">
    <molecule id="Q6ZMI3-2"/>
</dbReference>
<dbReference type="Antibodypedia" id="24837">
    <property type="antibodies" value="98 antibodies from 18 providers"/>
</dbReference>
<dbReference type="DNASU" id="342035"/>
<dbReference type="Ensembl" id="ENST00000335449.11">
    <molecule id="Q6ZMI3-1"/>
    <property type="protein sequence ID" value="ENSP00000335196.6"/>
    <property type="gene ID" value="ENSG00000186417.15"/>
</dbReference>
<dbReference type="Ensembl" id="ENST00000396399.6">
    <molecule id="Q6ZMI3-2"/>
    <property type="protein sequence ID" value="ENSP00000379681.2"/>
    <property type="gene ID" value="ENSG00000186417.15"/>
</dbReference>
<dbReference type="GeneID" id="342035"/>
<dbReference type="KEGG" id="hsa:342035"/>
<dbReference type="MANE-Select" id="ENST00000335449.11">
    <property type="protein sequence ID" value="ENSP00000335196.6"/>
    <property type="RefSeq nucleotide sequence ID" value="NM_181789.4"/>
    <property type="RefSeq protein sequence ID" value="NP_861454.2"/>
</dbReference>
<dbReference type="UCSC" id="uc002aba.4">
    <molecule id="Q6ZMI3-1"/>
    <property type="organism name" value="human"/>
</dbReference>
<dbReference type="AGR" id="HGNC:29514"/>
<dbReference type="CTD" id="342035"/>
<dbReference type="DisGeNET" id="342035"/>
<dbReference type="GeneCards" id="GLDN"/>
<dbReference type="HGNC" id="HGNC:29514">
    <property type="gene designation" value="GLDN"/>
</dbReference>
<dbReference type="HPA" id="ENSG00000186417">
    <property type="expression patterns" value="Tissue enhanced (adipose tissue, brain)"/>
</dbReference>
<dbReference type="MalaCards" id="GLDN"/>
<dbReference type="MIM" id="608603">
    <property type="type" value="gene"/>
</dbReference>
<dbReference type="MIM" id="617194">
    <property type="type" value="phenotype"/>
</dbReference>
<dbReference type="neXtProt" id="NX_Q6ZMI3"/>
<dbReference type="OpenTargets" id="ENSG00000186417"/>
<dbReference type="Orphanet" id="994">
    <property type="disease" value="Fetal akinesia deformation sequence"/>
</dbReference>
<dbReference type="PharmGKB" id="PA134882405"/>
<dbReference type="VEuPathDB" id="HostDB:ENSG00000186417"/>
<dbReference type="eggNOG" id="KOG3545">
    <property type="taxonomic scope" value="Eukaryota"/>
</dbReference>
<dbReference type="GeneTree" id="ENSGT00940000158020"/>
<dbReference type="HOGENOM" id="CLU_035236_3_0_1"/>
<dbReference type="InParanoid" id="Q6ZMI3"/>
<dbReference type="OMA" id="YIYDHGY"/>
<dbReference type="OrthoDB" id="8397025at2759"/>
<dbReference type="PAN-GO" id="Q6ZMI3">
    <property type="GO annotations" value="3 GO annotations based on evolutionary models"/>
</dbReference>
<dbReference type="PhylomeDB" id="Q6ZMI3"/>
<dbReference type="TreeFam" id="TF315964"/>
<dbReference type="PathwayCommons" id="Q6ZMI3"/>
<dbReference type="SignaLink" id="Q6ZMI3"/>
<dbReference type="SIGNOR" id="Q6ZMI3"/>
<dbReference type="BioGRID-ORCS" id="342035">
    <property type="hits" value="4 hits in 1139 CRISPR screens"/>
</dbReference>
<dbReference type="ChiTaRS" id="GLDN">
    <property type="organism name" value="human"/>
</dbReference>
<dbReference type="GenomeRNAi" id="342035"/>
<dbReference type="Pharos" id="Q6ZMI3">
    <property type="development level" value="Tbio"/>
</dbReference>
<dbReference type="PRO" id="PR:Q6ZMI3"/>
<dbReference type="Proteomes" id="UP000005640">
    <property type="component" value="Chromosome 15"/>
</dbReference>
<dbReference type="RNAct" id="Q6ZMI3">
    <property type="molecule type" value="protein"/>
</dbReference>
<dbReference type="Bgee" id="ENSG00000186417">
    <property type="expression patterns" value="Expressed in inferior vagus X ganglion and 166 other cell types or tissues"/>
</dbReference>
<dbReference type="ExpressionAtlas" id="Q6ZMI3">
    <property type="expression patterns" value="baseline and differential"/>
</dbReference>
<dbReference type="GO" id="GO:0030424">
    <property type="term" value="C:axon"/>
    <property type="evidence" value="ECO:0007669"/>
    <property type="project" value="UniProtKB-SubCell"/>
</dbReference>
<dbReference type="GO" id="GO:0009986">
    <property type="term" value="C:cell surface"/>
    <property type="evidence" value="ECO:0000314"/>
    <property type="project" value="UniProtKB"/>
</dbReference>
<dbReference type="GO" id="GO:0005581">
    <property type="term" value="C:collagen trimer"/>
    <property type="evidence" value="ECO:0007669"/>
    <property type="project" value="UniProtKB-KW"/>
</dbReference>
<dbReference type="GO" id="GO:0005615">
    <property type="term" value="C:extracellular space"/>
    <property type="evidence" value="ECO:0000318"/>
    <property type="project" value="GO_Central"/>
</dbReference>
<dbReference type="GO" id="GO:0005886">
    <property type="term" value="C:plasma membrane"/>
    <property type="evidence" value="ECO:0007669"/>
    <property type="project" value="UniProtKB-SubCell"/>
</dbReference>
<dbReference type="GO" id="GO:0086080">
    <property type="term" value="F:protein binding involved in heterotypic cell-cell adhesion"/>
    <property type="evidence" value="ECO:0007669"/>
    <property type="project" value="Ensembl"/>
</dbReference>
<dbReference type="GO" id="GO:0045162">
    <property type="term" value="P:clustering of voltage-gated sodium channels"/>
    <property type="evidence" value="ECO:0007669"/>
    <property type="project" value="Ensembl"/>
</dbReference>
<dbReference type="GO" id="GO:0032528">
    <property type="term" value="P:microvillus organization"/>
    <property type="evidence" value="ECO:0007669"/>
    <property type="project" value="Ensembl"/>
</dbReference>
<dbReference type="GO" id="GO:0007165">
    <property type="term" value="P:signal transduction"/>
    <property type="evidence" value="ECO:0000318"/>
    <property type="project" value="GO_Central"/>
</dbReference>
<dbReference type="Gene3D" id="1.20.5.320">
    <property type="entry name" value="6-Phosphogluconate Dehydrogenase, domain 3"/>
    <property type="match status" value="1"/>
</dbReference>
<dbReference type="InterPro" id="IPR008160">
    <property type="entry name" value="Collagen"/>
</dbReference>
<dbReference type="InterPro" id="IPR003112">
    <property type="entry name" value="Olfac-like_dom"/>
</dbReference>
<dbReference type="InterPro" id="IPR050605">
    <property type="entry name" value="Olfactomedin-like_domain"/>
</dbReference>
<dbReference type="PANTHER" id="PTHR23192:SF85">
    <property type="entry name" value="GLIOMEDIN"/>
    <property type="match status" value="1"/>
</dbReference>
<dbReference type="PANTHER" id="PTHR23192">
    <property type="entry name" value="OLFACTOMEDIN-RELATED"/>
    <property type="match status" value="1"/>
</dbReference>
<dbReference type="Pfam" id="PF01391">
    <property type="entry name" value="Collagen"/>
    <property type="match status" value="2"/>
</dbReference>
<dbReference type="Pfam" id="PF02191">
    <property type="entry name" value="OLF"/>
    <property type="match status" value="1"/>
</dbReference>
<dbReference type="SMART" id="SM00284">
    <property type="entry name" value="OLF"/>
    <property type="match status" value="1"/>
</dbReference>
<dbReference type="SUPFAM" id="SSF101898">
    <property type="entry name" value="NHL repeat"/>
    <property type="match status" value="1"/>
</dbReference>
<dbReference type="PROSITE" id="PS51132">
    <property type="entry name" value="OLF"/>
    <property type="match status" value="1"/>
</dbReference>
<sequence>MARGAEGGRGDAGWGLRGALAAVALLSALNAAGTVFALCQWRGLSSALRALEAQRGREQREDSALRSFLAELSRAPRGASAPPQDPASSARNKRSHSGEPAPHIRAESHDMLMMMTYSMVPIRVMVDLCNSTKGICLTGPSGPPGPPGAGGLPGHNGLDGQPGPQGPKGEKGANGKRGKMGIPGAAGNPGERGEKGDHGELGLQGNEGPPGQKGEKGDKGDVSNDVLLAGAKGDQGPPGPPGPPGPPGPPGPPGSRRAKGPRQPSMFNGQCPGETCAIPNDDTLVGKADEKASEHHSPQAESMITSIGNPVQVLKVTETFGTWIRESANKSDDRIWVTEHFSGIMVKEFKDQPSLLNGSYTFIHLPYYFHGCGHVVYNNSLYYHKGGSNTLVRFEFGQETSQTLKLENALYFDRKYLFANSKTYFNLAVDEKGLWIIYASSVDGSSILVAQLDERTFSVVQHVNTTYPKSKAGNAFIARGILYVTDTKDMRVTFAFDLLGGKQINANFDLRTSQSVLAMLAYNMRDQHLYSWEDGHLMLYPVQFLSTTLNQ</sequence>
<keyword id="KW-0002">3D-structure</keyword>
<keyword id="KW-0025">Alternative splicing</keyword>
<keyword id="KW-1003">Cell membrane</keyword>
<keyword id="KW-0966">Cell projection</keyword>
<keyword id="KW-0176">Collagen</keyword>
<keyword id="KW-0217">Developmental protein</keyword>
<keyword id="KW-0221">Differentiation</keyword>
<keyword id="KW-0225">Disease variant</keyword>
<keyword id="KW-0272">Extracellular matrix</keyword>
<keyword id="KW-0325">Glycoprotein</keyword>
<keyword id="KW-0472">Membrane</keyword>
<keyword id="KW-0524">Neurogenesis</keyword>
<keyword id="KW-1267">Proteomics identification</keyword>
<keyword id="KW-1185">Reference proteome</keyword>
<keyword id="KW-0677">Repeat</keyword>
<keyword id="KW-0964">Secreted</keyword>
<keyword id="KW-0735">Signal-anchor</keyword>
<keyword id="KW-0812">Transmembrane</keyword>
<keyword id="KW-1133">Transmembrane helix</keyword>
<proteinExistence type="evidence at protein level"/>
<name>GLDN_HUMAN</name>
<accession>Q6ZMI3</accession>
<accession>Q6UXZ7</accession>
<accession>Q7Z359</accession>
<comment type="function">
    <text evidence="2">Ligand for NRCAM and NFASC/neurofascin that plays a role in the formation and maintenance of the nodes of Ranvier on myelinated axons. Mediates interaction between Schwann cell microvilli and axons via its interactions with NRCAM and NFASC. Nodes of Ranvier contain clustered sodium channels that are crucial for the saltatory propagation of action potentials along myelinated axons. During development, nodes of Ranvier are formed by the fusion of two heminodes. Required for normal clustering of sodium channels at heminodes; not required for the formation of mature nodes with normal sodium channel clusters. Required, together with NRCAM, for maintaining NFASC and sodium channel clusters at mature nodes of Ranvier.</text>
</comment>
<comment type="subunit">
    <text evidence="2 8">Homotrimer (via collagen-like domains). Interacts with NRCAM and NFASC/neurofascin (PubMed:27616481). Interaction with glial NRCAM enhances interaction with axonal NFASC. Interacts with MYOC.</text>
</comment>
<comment type="subcellular location">
    <subcellularLocation>
        <location evidence="1 8">Cell membrane</location>
        <topology evidence="1">Single-pass type II membrane protein</topology>
    </subcellularLocation>
    <subcellularLocation>
        <location evidence="1">Cell projection</location>
        <location evidence="1">Axon</location>
    </subcellularLocation>
    <text evidence="1">Detected at the nodes of Ranvier. Detected at immature heminodes.</text>
</comment>
<comment type="subcellular location">
    <molecule>Gliomedin shedded ectodomain</molecule>
    <subcellularLocation>
        <location evidence="1">Secreted</location>
    </subcellularLocation>
    <subcellularLocation>
        <location evidence="1">Secreted</location>
        <location evidence="1">Extracellular space</location>
        <location evidence="1">Extracellular matrix</location>
    </subcellularLocation>
    <text evidence="1">Proteolytic processing gives rise to a soluble extracellular domain that is secreted. The gliomedin shedded ectodomain localizes to the nodes of Ranvier.</text>
</comment>
<comment type="alternative products">
    <event type="alternative splicing"/>
    <isoform>
        <id>Q6ZMI3-1</id>
        <name>1</name>
        <sequence type="displayed"/>
    </isoform>
    <isoform>
        <id>Q6ZMI3-2</id>
        <name>2</name>
        <sequence type="described" ref="VSP_019845"/>
    </isoform>
</comment>
<comment type="tissue specificity">
    <text evidence="7">Specifically expressed in spinal cord, brain, placenta and sciatic nerve. More abundant in peripheral than central nervous system.</text>
</comment>
<comment type="domain">
    <text evidence="2">The olfactomedin-like domain mediates NFASC/neurofascin and NRCAM binding.</text>
</comment>
<comment type="PTM">
    <text evidence="2">N-glycosylated.</text>
</comment>
<comment type="PTM">
    <text evidence="2">Proteolytic processing by a furin-like protease causes shedding of the ectodomain. Further cleavage by BMP1 releases the olfactomedin-like domain.</text>
</comment>
<comment type="disease" evidence="8">
    <disease id="DI-04874">
        <name>Lethal congenital contracture syndrome 11</name>
        <acronym>LCCS11</acronym>
        <description>A form of lethal congenital contracture syndrome, an autosomal recessive disorder characterized by degeneration of anterior horn neurons, extreme skeletal muscle atrophy and congenital non-progressive joint contractures. The contractures can involve the upper or lower limbs and/or the vertebral column, leading to various degrees of flexion or extension limitations evident at birth.</description>
        <dbReference type="MIM" id="617194"/>
    </disease>
    <text>The disease is caused by variants affecting the gene represented in this entry.</text>
</comment>
<organism>
    <name type="scientific">Homo sapiens</name>
    <name type="common">Human</name>
    <dbReference type="NCBI Taxonomy" id="9606"/>
    <lineage>
        <taxon>Eukaryota</taxon>
        <taxon>Metazoa</taxon>
        <taxon>Chordata</taxon>
        <taxon>Craniata</taxon>
        <taxon>Vertebrata</taxon>
        <taxon>Euteleostomi</taxon>
        <taxon>Mammalia</taxon>
        <taxon>Eutheria</taxon>
        <taxon>Euarchontoglires</taxon>
        <taxon>Primates</taxon>
        <taxon>Haplorrhini</taxon>
        <taxon>Catarrhini</taxon>
        <taxon>Hominidae</taxon>
        <taxon>Homo</taxon>
    </lineage>
</organism>
<protein>
    <recommendedName>
        <fullName>Gliomedin</fullName>
    </recommendedName>
    <component>
        <recommendedName>
            <fullName>Gliomedin shedded ectodomain</fullName>
        </recommendedName>
    </component>
</protein>
<evidence type="ECO:0000250" key="1">
    <source>
        <dbReference type="UniProtKB" id="Q80WL1"/>
    </source>
</evidence>
<evidence type="ECO:0000250" key="2">
    <source>
        <dbReference type="UniProtKB" id="Q8BMF8"/>
    </source>
</evidence>
<evidence type="ECO:0000255" key="3"/>
<evidence type="ECO:0000255" key="4">
    <source>
        <dbReference type="PROSITE-ProRule" id="PRU00446"/>
    </source>
</evidence>
<evidence type="ECO:0000256" key="5">
    <source>
        <dbReference type="SAM" id="MobiDB-lite"/>
    </source>
</evidence>
<evidence type="ECO:0000269" key="6">
    <source>
    </source>
</evidence>
<evidence type="ECO:0000269" key="7">
    <source>
    </source>
</evidence>
<evidence type="ECO:0000269" key="8">
    <source>
    </source>
</evidence>
<evidence type="ECO:0000303" key="9">
    <source>
    </source>
</evidence>
<evidence type="ECO:0000305" key="10"/>
<evidence type="ECO:0007829" key="11">
    <source>
        <dbReference type="PDB" id="5YBY"/>
    </source>
</evidence>
<feature type="chain" id="PRO_0000246321" description="Gliomedin">
    <location>
        <begin position="1"/>
        <end position="551"/>
    </location>
</feature>
<feature type="chain" id="PRO_0000434265" description="Gliomedin shedded ectodomain" evidence="2">
    <location>
        <begin position="95"/>
        <end position="454"/>
    </location>
</feature>
<feature type="topological domain" description="Cytoplasmic" evidence="3">
    <location>
        <begin position="1"/>
        <end position="17"/>
    </location>
</feature>
<feature type="transmembrane region" description="Helical; Signal-anchor for type II membrane protein" evidence="3">
    <location>
        <begin position="18"/>
        <end position="39"/>
    </location>
</feature>
<feature type="topological domain" description="Extracellular" evidence="3">
    <location>
        <begin position="40"/>
        <end position="551"/>
    </location>
</feature>
<feature type="domain" description="Collagen-like 1">
    <location>
        <begin position="137"/>
        <end position="195"/>
    </location>
</feature>
<feature type="domain" description="Collagen-like 2">
    <location>
        <begin position="196"/>
        <end position="222"/>
    </location>
</feature>
<feature type="domain" description="Olfactomedin-like" evidence="4">
    <location>
        <begin position="299"/>
        <end position="546"/>
    </location>
</feature>
<feature type="region of interest" description="Disordered" evidence="5">
    <location>
        <begin position="72"/>
        <end position="107"/>
    </location>
</feature>
<feature type="region of interest" description="Disordered" evidence="5">
    <location>
        <begin position="139"/>
        <end position="282"/>
    </location>
</feature>
<feature type="compositionally biased region" description="Low complexity" evidence="5">
    <location>
        <begin position="79"/>
        <end position="90"/>
    </location>
</feature>
<feature type="compositionally biased region" description="Basic and acidic residues" evidence="5">
    <location>
        <begin position="191"/>
        <end position="200"/>
    </location>
</feature>
<feature type="compositionally biased region" description="Basic and acidic residues" evidence="5">
    <location>
        <begin position="213"/>
        <end position="222"/>
    </location>
</feature>
<feature type="compositionally biased region" description="Pro residues" evidence="5">
    <location>
        <begin position="237"/>
        <end position="253"/>
    </location>
</feature>
<feature type="site" description="Cleavage; by furin-like protease" evidence="2">
    <location>
        <begin position="94"/>
        <end position="95"/>
    </location>
</feature>
<feature type="site" description="Cleavage; by BMP1" evidence="2">
    <location>
        <begin position="280"/>
        <end position="281"/>
    </location>
</feature>
<feature type="glycosylation site" description="N-linked (GlcNAc...) asparagine" evidence="3">
    <location>
        <position position="130"/>
    </location>
</feature>
<feature type="glycosylation site" description="N-linked (GlcNAc...) asparagine" evidence="3">
    <location>
        <position position="329"/>
    </location>
</feature>
<feature type="glycosylation site" description="N-linked (GlcNAc...) asparagine" evidence="3">
    <location>
        <position position="357"/>
    </location>
</feature>
<feature type="glycosylation site" description="N-linked (GlcNAc...) asparagine" evidence="3">
    <location>
        <position position="378"/>
    </location>
</feature>
<feature type="glycosylation site" description="N-linked (GlcNAc...) asparagine" evidence="3">
    <location>
        <position position="464"/>
    </location>
</feature>
<feature type="splice variant" id="VSP_019845" description="In isoform 2." evidence="9">
    <location>
        <begin position="1"/>
        <end position="124"/>
    </location>
</feature>
<feature type="sequence variant" id="VAR_078545" description="In LCCS11; abolishes cell surface localization; abolishes interaction with NFASC; dbSNP:rs779432560." evidence="8">
    <original>A</original>
    <variation>E</variation>
    <location>
        <position position="32"/>
    </location>
</feature>
<feature type="sequence variant" id="VAR_027039" description="In dbSNP:rs17648128.">
    <original>S</original>
    <variation>N</variation>
    <location>
        <position position="141"/>
    </location>
</feature>
<feature type="sequence variant" id="VAR_050424" description="In dbSNP:rs17648128." evidence="6">
    <original>S</original>
    <variation>N</variation>
    <location>
        <position position="265"/>
    </location>
</feature>
<feature type="sequence variant" id="VAR_061484" description="In dbSNP:rs35223886.">
    <original>D</original>
    <variation>N</variation>
    <location>
        <position position="351"/>
    </location>
</feature>
<feature type="sequence variant" id="VAR_078546" description="In LCCS11; abolishes cell surface localization; abolishes interaction with NFASC; dbSNP:rs764239923." evidence="8">
    <original>A</original>
    <variation>P</variation>
    <location>
        <position position="475"/>
    </location>
</feature>
<feature type="sequence conflict" description="In Ref. 2; CAD98018." evidence="10" ref="2">
    <original>V</original>
    <variation>A</variation>
    <location>
        <position position="376"/>
    </location>
</feature>
<feature type="strand" evidence="11">
    <location>
        <begin position="303"/>
        <end position="307"/>
    </location>
</feature>
<feature type="strand" evidence="11">
    <location>
        <begin position="311"/>
        <end position="315"/>
    </location>
</feature>
<feature type="strand" evidence="11">
    <location>
        <begin position="319"/>
        <end position="325"/>
    </location>
</feature>
<feature type="strand" evidence="11">
    <location>
        <begin position="328"/>
        <end position="330"/>
    </location>
</feature>
<feature type="strand" evidence="11">
    <location>
        <begin position="335"/>
        <end position="351"/>
    </location>
</feature>
<feature type="helix" evidence="11">
    <location>
        <begin position="352"/>
        <end position="357"/>
    </location>
</feature>
<feature type="strand" evidence="11">
    <location>
        <begin position="361"/>
        <end position="372"/>
    </location>
</feature>
<feature type="strand" evidence="11">
    <location>
        <begin position="375"/>
        <end position="377"/>
    </location>
</feature>
<feature type="strand" evidence="11">
    <location>
        <begin position="380"/>
        <end position="385"/>
    </location>
</feature>
<feature type="strand" evidence="11">
    <location>
        <begin position="388"/>
        <end position="395"/>
    </location>
</feature>
<feature type="turn" evidence="11">
    <location>
        <begin position="396"/>
        <end position="398"/>
    </location>
</feature>
<feature type="strand" evidence="11">
    <location>
        <begin position="401"/>
        <end position="405"/>
    </location>
</feature>
<feature type="helix" evidence="11">
    <location>
        <begin position="419"/>
        <end position="421"/>
    </location>
</feature>
<feature type="strand" evidence="11">
    <location>
        <begin position="426"/>
        <end position="430"/>
    </location>
</feature>
<feature type="strand" evidence="11">
    <location>
        <begin position="433"/>
        <end position="440"/>
    </location>
</feature>
<feature type="turn" evidence="11">
    <location>
        <begin position="441"/>
        <end position="443"/>
    </location>
</feature>
<feature type="strand" evidence="11">
    <location>
        <begin position="446"/>
        <end position="452"/>
    </location>
</feature>
<feature type="turn" evidence="11">
    <location>
        <begin position="454"/>
        <end position="456"/>
    </location>
</feature>
<feature type="strand" evidence="11">
    <location>
        <begin position="459"/>
        <end position="468"/>
    </location>
</feature>
<feature type="helix" evidence="11">
    <location>
        <begin position="469"/>
        <end position="471"/>
    </location>
</feature>
<feature type="strand" evidence="11">
    <location>
        <begin position="475"/>
        <end position="478"/>
    </location>
</feature>
<feature type="strand" evidence="11">
    <location>
        <begin position="481"/>
        <end position="485"/>
    </location>
</feature>
<feature type="strand" evidence="11">
    <location>
        <begin position="489"/>
        <end position="497"/>
    </location>
</feature>
<feature type="turn" evidence="11">
    <location>
        <begin position="498"/>
        <end position="501"/>
    </location>
</feature>
<feature type="strand" evidence="11">
    <location>
        <begin position="502"/>
        <end position="504"/>
    </location>
</feature>
<feature type="strand" evidence="11">
    <location>
        <begin position="517"/>
        <end position="523"/>
    </location>
</feature>
<feature type="turn" evidence="11">
    <location>
        <begin position="524"/>
        <end position="527"/>
    </location>
</feature>
<feature type="strand" evidence="11">
    <location>
        <begin position="528"/>
        <end position="533"/>
    </location>
</feature>
<feature type="strand" evidence="11">
    <location>
        <begin position="536"/>
        <end position="545"/>
    </location>
</feature>
<reference key="1">
    <citation type="journal article" date="2004" name="Nat. Genet.">
        <title>Complete sequencing and characterization of 21,243 full-length human cDNAs.</title>
        <authorList>
            <person name="Ota T."/>
            <person name="Suzuki Y."/>
            <person name="Nishikawa T."/>
            <person name="Otsuki T."/>
            <person name="Sugiyama T."/>
            <person name="Irie R."/>
            <person name="Wakamatsu A."/>
            <person name="Hayashi K."/>
            <person name="Sato H."/>
            <person name="Nagai K."/>
            <person name="Kimura K."/>
            <person name="Makita H."/>
            <person name="Sekine M."/>
            <person name="Obayashi M."/>
            <person name="Nishi T."/>
            <person name="Shibahara T."/>
            <person name="Tanaka T."/>
            <person name="Ishii S."/>
            <person name="Yamamoto J."/>
            <person name="Saito K."/>
            <person name="Kawai Y."/>
            <person name="Isono Y."/>
            <person name="Nakamura Y."/>
            <person name="Nagahari K."/>
            <person name="Murakami K."/>
            <person name="Yasuda T."/>
            <person name="Iwayanagi T."/>
            <person name="Wagatsuma M."/>
            <person name="Shiratori A."/>
            <person name="Sudo H."/>
            <person name="Hosoiri T."/>
            <person name="Kaku Y."/>
            <person name="Kodaira H."/>
            <person name="Kondo H."/>
            <person name="Sugawara M."/>
            <person name="Takahashi M."/>
            <person name="Kanda K."/>
            <person name="Yokoi T."/>
            <person name="Furuya T."/>
            <person name="Kikkawa E."/>
            <person name="Omura Y."/>
            <person name="Abe K."/>
            <person name="Kamihara K."/>
            <person name="Katsuta N."/>
            <person name="Sato K."/>
            <person name="Tanikawa M."/>
            <person name="Yamazaki M."/>
            <person name="Ninomiya K."/>
            <person name="Ishibashi T."/>
            <person name="Yamashita H."/>
            <person name="Murakawa K."/>
            <person name="Fujimori K."/>
            <person name="Tanai H."/>
            <person name="Kimata M."/>
            <person name="Watanabe M."/>
            <person name="Hiraoka S."/>
            <person name="Chiba Y."/>
            <person name="Ishida S."/>
            <person name="Ono Y."/>
            <person name="Takiguchi S."/>
            <person name="Watanabe S."/>
            <person name="Yosida M."/>
            <person name="Hotuta T."/>
            <person name="Kusano J."/>
            <person name="Kanehori K."/>
            <person name="Takahashi-Fujii A."/>
            <person name="Hara H."/>
            <person name="Tanase T.-O."/>
            <person name="Nomura Y."/>
            <person name="Togiya S."/>
            <person name="Komai F."/>
            <person name="Hara R."/>
            <person name="Takeuchi K."/>
            <person name="Arita M."/>
            <person name="Imose N."/>
            <person name="Musashino K."/>
            <person name="Yuuki H."/>
            <person name="Oshima A."/>
            <person name="Sasaki N."/>
            <person name="Aotsuka S."/>
            <person name="Yoshikawa Y."/>
            <person name="Matsunawa H."/>
            <person name="Ichihara T."/>
            <person name="Shiohata N."/>
            <person name="Sano S."/>
            <person name="Moriya S."/>
            <person name="Momiyama H."/>
            <person name="Satoh N."/>
            <person name="Takami S."/>
            <person name="Terashima Y."/>
            <person name="Suzuki O."/>
            <person name="Nakagawa S."/>
            <person name="Senoh A."/>
            <person name="Mizoguchi H."/>
            <person name="Goto Y."/>
            <person name="Shimizu F."/>
            <person name="Wakebe H."/>
            <person name="Hishigaki H."/>
            <person name="Watanabe T."/>
            <person name="Sugiyama A."/>
            <person name="Takemoto M."/>
            <person name="Kawakami B."/>
            <person name="Yamazaki M."/>
            <person name="Watanabe K."/>
            <person name="Kumagai A."/>
            <person name="Itakura S."/>
            <person name="Fukuzumi Y."/>
            <person name="Fujimori Y."/>
            <person name="Komiyama M."/>
            <person name="Tashiro H."/>
            <person name="Tanigami A."/>
            <person name="Fujiwara T."/>
            <person name="Ono T."/>
            <person name="Yamada K."/>
            <person name="Fujii Y."/>
            <person name="Ozaki K."/>
            <person name="Hirao M."/>
            <person name="Ohmori Y."/>
            <person name="Kawabata A."/>
            <person name="Hikiji T."/>
            <person name="Kobatake N."/>
            <person name="Inagaki H."/>
            <person name="Ikema Y."/>
            <person name="Okamoto S."/>
            <person name="Okitani R."/>
            <person name="Kawakami T."/>
            <person name="Noguchi S."/>
            <person name="Itoh T."/>
            <person name="Shigeta K."/>
            <person name="Senba T."/>
            <person name="Matsumura K."/>
            <person name="Nakajima Y."/>
            <person name="Mizuno T."/>
            <person name="Morinaga M."/>
            <person name="Sasaki M."/>
            <person name="Togashi T."/>
            <person name="Oyama M."/>
            <person name="Hata H."/>
            <person name="Watanabe M."/>
            <person name="Komatsu T."/>
            <person name="Mizushima-Sugano J."/>
            <person name="Satoh T."/>
            <person name="Shirai Y."/>
            <person name="Takahashi Y."/>
            <person name="Nakagawa K."/>
            <person name="Okumura K."/>
            <person name="Nagase T."/>
            <person name="Nomura N."/>
            <person name="Kikuchi H."/>
            <person name="Masuho Y."/>
            <person name="Yamashita R."/>
            <person name="Nakai K."/>
            <person name="Yada T."/>
            <person name="Nakamura Y."/>
            <person name="Ohara O."/>
            <person name="Isogai T."/>
            <person name="Sugano S."/>
        </authorList>
    </citation>
    <scope>NUCLEOTIDE SEQUENCE [LARGE SCALE MRNA] (ISOFORM 1)</scope>
    <source>
        <tissue>Colon</tissue>
    </source>
</reference>
<reference key="2">
    <citation type="journal article" date="2007" name="BMC Genomics">
        <title>The full-ORF clone resource of the German cDNA consortium.</title>
        <authorList>
            <person name="Bechtel S."/>
            <person name="Rosenfelder H."/>
            <person name="Duda A."/>
            <person name="Schmidt C.P."/>
            <person name="Ernst U."/>
            <person name="Wellenreuther R."/>
            <person name="Mehrle A."/>
            <person name="Schuster C."/>
            <person name="Bahr A."/>
            <person name="Bloecker H."/>
            <person name="Heubner D."/>
            <person name="Hoerlein A."/>
            <person name="Michel G."/>
            <person name="Wedler H."/>
            <person name="Koehrer K."/>
            <person name="Ottenwaelder B."/>
            <person name="Poustka A."/>
            <person name="Wiemann S."/>
            <person name="Schupp I."/>
        </authorList>
    </citation>
    <scope>NUCLEOTIDE SEQUENCE [LARGE SCALE MRNA] (ISOFORM 2)</scope>
    <source>
        <tissue>Colon endothelium</tissue>
    </source>
</reference>
<reference key="3">
    <citation type="journal article" date="2003" name="Genome Res.">
        <title>The secreted protein discovery initiative (SPDI), a large-scale effort to identify novel human secreted and transmembrane proteins: a bioinformatics assessment.</title>
        <authorList>
            <person name="Clark H.F."/>
            <person name="Gurney A.L."/>
            <person name="Abaya E."/>
            <person name="Baker K."/>
            <person name="Baldwin D.T."/>
            <person name="Brush J."/>
            <person name="Chen J."/>
            <person name="Chow B."/>
            <person name="Chui C."/>
            <person name="Crowley C."/>
            <person name="Currell B."/>
            <person name="Deuel B."/>
            <person name="Dowd P."/>
            <person name="Eaton D."/>
            <person name="Foster J.S."/>
            <person name="Grimaldi C."/>
            <person name="Gu Q."/>
            <person name="Hass P.E."/>
            <person name="Heldens S."/>
            <person name="Huang A."/>
            <person name="Kim H.S."/>
            <person name="Klimowski L."/>
            <person name="Jin Y."/>
            <person name="Johnson S."/>
            <person name="Lee J."/>
            <person name="Lewis L."/>
            <person name="Liao D."/>
            <person name="Mark M.R."/>
            <person name="Robbie E."/>
            <person name="Sanchez C."/>
            <person name="Schoenfeld J."/>
            <person name="Seshagiri S."/>
            <person name="Simmons L."/>
            <person name="Singh J."/>
            <person name="Smith V."/>
            <person name="Stinson J."/>
            <person name="Vagts A."/>
            <person name="Vandlen R.L."/>
            <person name="Watanabe C."/>
            <person name="Wieand D."/>
            <person name="Woods K."/>
            <person name="Xie M.-H."/>
            <person name="Yansura D.G."/>
            <person name="Yi S."/>
            <person name="Yu G."/>
            <person name="Yuan J."/>
            <person name="Zhang M."/>
            <person name="Zhang Z."/>
            <person name="Goddard A.D."/>
            <person name="Wood W.I."/>
            <person name="Godowski P.J."/>
            <person name="Gray A.M."/>
        </authorList>
    </citation>
    <scope>NUCLEOTIDE SEQUENCE [LARGE SCALE MRNA] OF 125-551 (ISOFORMS 1/2)</scope>
    <scope>VARIANT ASN-265</scope>
</reference>
<reference key="4">
    <citation type="journal article" date="2005" name="Neuron">
        <title>Gliomedin mediates Schwann cell-axon interaction and the molecular assembly of the nodes of Ranvier.</title>
        <authorList>
            <person name="Eshed Y."/>
            <person name="Feinberg K."/>
            <person name="Poliak S."/>
            <person name="Sabanay H."/>
            <person name="Sarig-Nadir O."/>
            <person name="Spiegel I."/>
            <person name="Bermingham J.R. Jr."/>
            <person name="Peles E."/>
        </authorList>
    </citation>
    <scope>IDENTIFICATION</scope>
    <scope>TISSUE SPECIFICITY</scope>
</reference>
<reference key="5">
    <citation type="journal article" date="2016" name="Am. J. Hum. Genet.">
        <title>Mutations in GLDN, encoding gliomedin, a critical component of the nodes of ranvier, are responsible for lethal arthrogryposis.</title>
        <authorList>
            <person name="Maluenda J."/>
            <person name="Manso C."/>
            <person name="Quevarec L."/>
            <person name="Vivanti A."/>
            <person name="Marguet F."/>
            <person name="Gonzales M."/>
            <person name="Guimiot F."/>
            <person name="Petit F."/>
            <person name="Toutain A."/>
            <person name="Whalen S."/>
            <person name="Grigorescu R."/>
            <person name="Coeslier A.D."/>
            <person name="Gut M."/>
            <person name="Gut I."/>
            <person name="Laquerriere A."/>
            <person name="Devaux J."/>
            <person name="Melki J."/>
        </authorList>
    </citation>
    <scope>INVOLVEMENT IN LCCS11</scope>
    <scope>VARIANTS LCCS11 GLU-32 AND PRO-475</scope>
    <scope>CHARACTERIZATION OF VARIANTS LCCS11 GLU-32 AND PRO-475</scope>
    <scope>INTERACTION WITH NFASC</scope>
    <scope>SUBCELLULAR LOCATION</scope>
</reference>